<name>RL14_PSEF5</name>
<gene>
    <name evidence="1" type="primary">rplN</name>
    <name type="ordered locus">PFL_5572</name>
</gene>
<dbReference type="EMBL" id="CP000076">
    <property type="protein sequence ID" value="AAY94777.1"/>
    <property type="molecule type" value="Genomic_DNA"/>
</dbReference>
<dbReference type="RefSeq" id="WP_011063774.1">
    <property type="nucleotide sequence ID" value="NC_004129.6"/>
</dbReference>
<dbReference type="SMR" id="Q4K543"/>
<dbReference type="STRING" id="220664.PFL_5572"/>
<dbReference type="GeneID" id="97252164"/>
<dbReference type="KEGG" id="pfl:PFL_5572"/>
<dbReference type="eggNOG" id="COG0093">
    <property type="taxonomic scope" value="Bacteria"/>
</dbReference>
<dbReference type="HOGENOM" id="CLU_095071_2_1_6"/>
<dbReference type="Proteomes" id="UP000008540">
    <property type="component" value="Chromosome"/>
</dbReference>
<dbReference type="GO" id="GO:0022625">
    <property type="term" value="C:cytosolic large ribosomal subunit"/>
    <property type="evidence" value="ECO:0007669"/>
    <property type="project" value="TreeGrafter"/>
</dbReference>
<dbReference type="GO" id="GO:0070180">
    <property type="term" value="F:large ribosomal subunit rRNA binding"/>
    <property type="evidence" value="ECO:0007669"/>
    <property type="project" value="TreeGrafter"/>
</dbReference>
<dbReference type="GO" id="GO:0003735">
    <property type="term" value="F:structural constituent of ribosome"/>
    <property type="evidence" value="ECO:0007669"/>
    <property type="project" value="InterPro"/>
</dbReference>
<dbReference type="GO" id="GO:0006412">
    <property type="term" value="P:translation"/>
    <property type="evidence" value="ECO:0007669"/>
    <property type="project" value="UniProtKB-UniRule"/>
</dbReference>
<dbReference type="CDD" id="cd00337">
    <property type="entry name" value="Ribosomal_uL14"/>
    <property type="match status" value="1"/>
</dbReference>
<dbReference type="FunFam" id="2.40.150.20:FF:000001">
    <property type="entry name" value="50S ribosomal protein L14"/>
    <property type="match status" value="1"/>
</dbReference>
<dbReference type="Gene3D" id="2.40.150.20">
    <property type="entry name" value="Ribosomal protein L14"/>
    <property type="match status" value="1"/>
</dbReference>
<dbReference type="HAMAP" id="MF_01367">
    <property type="entry name" value="Ribosomal_uL14"/>
    <property type="match status" value="1"/>
</dbReference>
<dbReference type="InterPro" id="IPR000218">
    <property type="entry name" value="Ribosomal_uL14"/>
</dbReference>
<dbReference type="InterPro" id="IPR005745">
    <property type="entry name" value="Ribosomal_uL14_bac-type"/>
</dbReference>
<dbReference type="InterPro" id="IPR019972">
    <property type="entry name" value="Ribosomal_uL14_CS"/>
</dbReference>
<dbReference type="InterPro" id="IPR036853">
    <property type="entry name" value="Ribosomal_uL14_sf"/>
</dbReference>
<dbReference type="NCBIfam" id="TIGR01067">
    <property type="entry name" value="rplN_bact"/>
    <property type="match status" value="1"/>
</dbReference>
<dbReference type="PANTHER" id="PTHR11761">
    <property type="entry name" value="50S/60S RIBOSOMAL PROTEIN L14/L23"/>
    <property type="match status" value="1"/>
</dbReference>
<dbReference type="PANTHER" id="PTHR11761:SF3">
    <property type="entry name" value="LARGE RIBOSOMAL SUBUNIT PROTEIN UL14M"/>
    <property type="match status" value="1"/>
</dbReference>
<dbReference type="Pfam" id="PF00238">
    <property type="entry name" value="Ribosomal_L14"/>
    <property type="match status" value="1"/>
</dbReference>
<dbReference type="SMART" id="SM01374">
    <property type="entry name" value="Ribosomal_L14"/>
    <property type="match status" value="1"/>
</dbReference>
<dbReference type="SUPFAM" id="SSF50193">
    <property type="entry name" value="Ribosomal protein L14"/>
    <property type="match status" value="1"/>
</dbReference>
<dbReference type="PROSITE" id="PS00049">
    <property type="entry name" value="RIBOSOMAL_L14"/>
    <property type="match status" value="1"/>
</dbReference>
<protein>
    <recommendedName>
        <fullName evidence="1">Large ribosomal subunit protein uL14</fullName>
    </recommendedName>
    <alternativeName>
        <fullName evidence="2">50S ribosomal protein L14</fullName>
    </alternativeName>
</protein>
<feature type="chain" id="PRO_0000266526" description="Large ribosomal subunit protein uL14">
    <location>
        <begin position="1"/>
        <end position="122"/>
    </location>
</feature>
<proteinExistence type="inferred from homology"/>
<organism>
    <name type="scientific">Pseudomonas fluorescens (strain ATCC BAA-477 / NRRL B-23932 / Pf-5)</name>
    <dbReference type="NCBI Taxonomy" id="220664"/>
    <lineage>
        <taxon>Bacteria</taxon>
        <taxon>Pseudomonadati</taxon>
        <taxon>Pseudomonadota</taxon>
        <taxon>Gammaproteobacteria</taxon>
        <taxon>Pseudomonadales</taxon>
        <taxon>Pseudomonadaceae</taxon>
        <taxon>Pseudomonas</taxon>
    </lineage>
</organism>
<sequence length="122" mass="13423">MIQTQSMLDVADNSGARRVMCIKVLGGSHRRYAGIGDIIKVTVKEAIPRGKVKKGQVMTAVVVRTRHGVRRADGSIIRFDGNAAVLLNNKQEPIGTRIFGPVTRELRNEKFMKIVSLAPEVL</sequence>
<reference key="1">
    <citation type="journal article" date="2005" name="Nat. Biotechnol.">
        <title>Complete genome sequence of the plant commensal Pseudomonas fluorescens Pf-5.</title>
        <authorList>
            <person name="Paulsen I.T."/>
            <person name="Press C.M."/>
            <person name="Ravel J."/>
            <person name="Kobayashi D.Y."/>
            <person name="Myers G.S.A."/>
            <person name="Mavrodi D.V."/>
            <person name="DeBoy R.T."/>
            <person name="Seshadri R."/>
            <person name="Ren Q."/>
            <person name="Madupu R."/>
            <person name="Dodson R.J."/>
            <person name="Durkin A.S."/>
            <person name="Brinkac L.M."/>
            <person name="Daugherty S.C."/>
            <person name="Sullivan S.A."/>
            <person name="Rosovitz M.J."/>
            <person name="Gwinn M.L."/>
            <person name="Zhou L."/>
            <person name="Schneider D.J."/>
            <person name="Cartinhour S.W."/>
            <person name="Nelson W.C."/>
            <person name="Weidman J."/>
            <person name="Watkins K."/>
            <person name="Tran K."/>
            <person name="Khouri H."/>
            <person name="Pierson E.A."/>
            <person name="Pierson L.S. III"/>
            <person name="Thomashow L.S."/>
            <person name="Loper J.E."/>
        </authorList>
    </citation>
    <scope>NUCLEOTIDE SEQUENCE [LARGE SCALE GENOMIC DNA]</scope>
    <source>
        <strain>ATCC BAA-477 / NRRL B-23932 / Pf-5</strain>
    </source>
</reference>
<accession>Q4K543</accession>
<keyword id="KW-0687">Ribonucleoprotein</keyword>
<keyword id="KW-0689">Ribosomal protein</keyword>
<keyword id="KW-0694">RNA-binding</keyword>
<keyword id="KW-0699">rRNA-binding</keyword>
<evidence type="ECO:0000255" key="1">
    <source>
        <dbReference type="HAMAP-Rule" id="MF_01367"/>
    </source>
</evidence>
<evidence type="ECO:0000305" key="2"/>
<comment type="function">
    <text evidence="1">Binds to 23S rRNA. Forms part of two intersubunit bridges in the 70S ribosome.</text>
</comment>
<comment type="subunit">
    <text evidence="1">Part of the 50S ribosomal subunit. Forms a cluster with proteins L3 and L19. In the 70S ribosome, L14 and L19 interact and together make contacts with the 16S rRNA in bridges B5 and B8.</text>
</comment>
<comment type="similarity">
    <text evidence="1">Belongs to the universal ribosomal protein uL14 family.</text>
</comment>